<feature type="chain" id="PRO_1000197478" description="Polyamine aminopropyltransferase">
    <location>
        <begin position="1"/>
        <end position="286"/>
    </location>
</feature>
<feature type="domain" description="PABS" evidence="1">
    <location>
        <begin position="5"/>
        <end position="238"/>
    </location>
</feature>
<feature type="active site" description="Proton acceptor" evidence="1">
    <location>
        <position position="158"/>
    </location>
</feature>
<feature type="binding site" evidence="1">
    <location>
        <position position="33"/>
    </location>
    <ligand>
        <name>S-methyl-5'-thioadenosine</name>
        <dbReference type="ChEBI" id="CHEBI:17509"/>
    </ligand>
</feature>
<feature type="binding site" evidence="1">
    <location>
        <position position="64"/>
    </location>
    <ligand>
        <name>spermidine</name>
        <dbReference type="ChEBI" id="CHEBI:57834"/>
    </ligand>
</feature>
<feature type="binding site" evidence="1">
    <location>
        <position position="88"/>
    </location>
    <ligand>
        <name>spermidine</name>
        <dbReference type="ChEBI" id="CHEBI:57834"/>
    </ligand>
</feature>
<feature type="binding site" evidence="1">
    <location>
        <position position="108"/>
    </location>
    <ligand>
        <name>S-methyl-5'-thioadenosine</name>
        <dbReference type="ChEBI" id="CHEBI:17509"/>
    </ligand>
</feature>
<feature type="binding site" evidence="1">
    <location>
        <begin position="140"/>
        <end position="141"/>
    </location>
    <ligand>
        <name>S-methyl-5'-thioadenosine</name>
        <dbReference type="ChEBI" id="CHEBI:17509"/>
    </ligand>
</feature>
<feature type="binding site" evidence="1">
    <location>
        <begin position="158"/>
        <end position="161"/>
    </location>
    <ligand>
        <name>spermidine</name>
        <dbReference type="ChEBI" id="CHEBI:57834"/>
    </ligand>
</feature>
<feature type="binding site" evidence="1">
    <location>
        <position position="165"/>
    </location>
    <ligand>
        <name>S-methyl-5'-thioadenosine</name>
        <dbReference type="ChEBI" id="CHEBI:17509"/>
    </ligand>
</feature>
<reference key="1">
    <citation type="journal article" date="2009" name="PLoS ONE">
        <title>Salmonella paratyphi C: genetic divergence from Salmonella choleraesuis and pathogenic convergence with Salmonella typhi.</title>
        <authorList>
            <person name="Liu W.-Q."/>
            <person name="Feng Y."/>
            <person name="Wang Y."/>
            <person name="Zou Q.-H."/>
            <person name="Chen F."/>
            <person name="Guo J.-T."/>
            <person name="Peng Y.-H."/>
            <person name="Jin Y."/>
            <person name="Li Y.-G."/>
            <person name="Hu S.-N."/>
            <person name="Johnston R.N."/>
            <person name="Liu G.-R."/>
            <person name="Liu S.-L."/>
        </authorList>
    </citation>
    <scope>NUCLEOTIDE SEQUENCE [LARGE SCALE GENOMIC DNA]</scope>
    <source>
        <strain>RKS4594</strain>
    </source>
</reference>
<dbReference type="EC" id="2.5.1.16" evidence="1"/>
<dbReference type="EMBL" id="CP000857">
    <property type="protein sequence ID" value="ACN44369.1"/>
    <property type="molecule type" value="Genomic_DNA"/>
</dbReference>
<dbReference type="RefSeq" id="WP_000829968.1">
    <property type="nucleotide sequence ID" value="NC_012125.1"/>
</dbReference>
<dbReference type="SMR" id="C0Q5M7"/>
<dbReference type="KEGG" id="sei:SPC_0179"/>
<dbReference type="HOGENOM" id="CLU_048199_0_0_6"/>
<dbReference type="UniPathway" id="UPA00248">
    <property type="reaction ID" value="UER00314"/>
</dbReference>
<dbReference type="Proteomes" id="UP000001599">
    <property type="component" value="Chromosome"/>
</dbReference>
<dbReference type="GO" id="GO:0005829">
    <property type="term" value="C:cytosol"/>
    <property type="evidence" value="ECO:0007669"/>
    <property type="project" value="TreeGrafter"/>
</dbReference>
<dbReference type="GO" id="GO:0004766">
    <property type="term" value="F:spermidine synthase activity"/>
    <property type="evidence" value="ECO:0007669"/>
    <property type="project" value="UniProtKB-UniRule"/>
</dbReference>
<dbReference type="GO" id="GO:0008295">
    <property type="term" value="P:spermidine biosynthetic process"/>
    <property type="evidence" value="ECO:0007669"/>
    <property type="project" value="UniProtKB-UniRule"/>
</dbReference>
<dbReference type="CDD" id="cd02440">
    <property type="entry name" value="AdoMet_MTases"/>
    <property type="match status" value="1"/>
</dbReference>
<dbReference type="FunFam" id="2.30.140.10:FF:000002">
    <property type="entry name" value="Polyamine aminopropyltransferase"/>
    <property type="match status" value="1"/>
</dbReference>
<dbReference type="FunFam" id="3.40.50.150:FF:000026">
    <property type="entry name" value="Polyamine aminopropyltransferase"/>
    <property type="match status" value="1"/>
</dbReference>
<dbReference type="Gene3D" id="2.30.140.10">
    <property type="entry name" value="Spermidine synthase, tetramerisation domain"/>
    <property type="match status" value="1"/>
</dbReference>
<dbReference type="Gene3D" id="3.40.50.150">
    <property type="entry name" value="Vaccinia Virus protein VP39"/>
    <property type="match status" value="1"/>
</dbReference>
<dbReference type="HAMAP" id="MF_00198">
    <property type="entry name" value="Spermidine_synth"/>
    <property type="match status" value="1"/>
</dbReference>
<dbReference type="InterPro" id="IPR030374">
    <property type="entry name" value="PABS"/>
</dbReference>
<dbReference type="InterPro" id="IPR030373">
    <property type="entry name" value="PABS_CS"/>
</dbReference>
<dbReference type="InterPro" id="IPR029063">
    <property type="entry name" value="SAM-dependent_MTases_sf"/>
</dbReference>
<dbReference type="InterPro" id="IPR001045">
    <property type="entry name" value="Spermi_synthase"/>
</dbReference>
<dbReference type="InterPro" id="IPR035246">
    <property type="entry name" value="Spermidine_synt_N"/>
</dbReference>
<dbReference type="InterPro" id="IPR037163">
    <property type="entry name" value="Spermidine_synt_N_sf"/>
</dbReference>
<dbReference type="NCBIfam" id="NF037959">
    <property type="entry name" value="MFS_SpdSyn"/>
    <property type="match status" value="1"/>
</dbReference>
<dbReference type="NCBIfam" id="NF002010">
    <property type="entry name" value="PRK00811.1"/>
    <property type="match status" value="1"/>
</dbReference>
<dbReference type="NCBIfam" id="TIGR00417">
    <property type="entry name" value="speE"/>
    <property type="match status" value="1"/>
</dbReference>
<dbReference type="PANTHER" id="PTHR11558:SF11">
    <property type="entry name" value="SPERMIDINE SYNTHASE"/>
    <property type="match status" value="1"/>
</dbReference>
<dbReference type="PANTHER" id="PTHR11558">
    <property type="entry name" value="SPERMIDINE/SPERMINE SYNTHASE"/>
    <property type="match status" value="1"/>
</dbReference>
<dbReference type="Pfam" id="PF17284">
    <property type="entry name" value="Spermine_synt_N"/>
    <property type="match status" value="1"/>
</dbReference>
<dbReference type="Pfam" id="PF01564">
    <property type="entry name" value="Spermine_synth"/>
    <property type="match status" value="1"/>
</dbReference>
<dbReference type="SUPFAM" id="SSF53335">
    <property type="entry name" value="S-adenosyl-L-methionine-dependent methyltransferases"/>
    <property type="match status" value="1"/>
</dbReference>
<dbReference type="PROSITE" id="PS01330">
    <property type="entry name" value="PABS_1"/>
    <property type="match status" value="1"/>
</dbReference>
<dbReference type="PROSITE" id="PS51006">
    <property type="entry name" value="PABS_2"/>
    <property type="match status" value="1"/>
</dbReference>
<sequence length="286" mass="32095">MAENTMWHETLHDQFGQYFAVDNVLYHEKTDHQDLIIFENAAFGRVMALDGVVQTTERDEFIYHEMMTHVPLLAHGHAKHVLIIGGGDGAMLREVTRHKNVETITMVEIDAGVVSFCRQYLPNHNAGSYDDPRFTLVIDDGVNFVNQTHQTFDVIISDCTDPIGPGESLFTSAFYEGCKRCLNPGGIFVAQNGVCFLQQDEALDSHRKLSHYFSDVGFYQAAIPTYYGGIMTFAWATDNDALRHLSSEIIQARFHAAGLKCRYYNPAIHAAAFALPQYLHDALSAQ</sequence>
<name>SPEE_SALPC</name>
<comment type="function">
    <text evidence="1">Catalyzes the irreversible transfer of a propylamine group from the amino donor S-adenosylmethioninamine (decarboxy-AdoMet) to putrescine (1,4-diaminobutane) to yield spermidine.</text>
</comment>
<comment type="catalytic activity">
    <reaction evidence="1">
        <text>S-adenosyl 3-(methylsulfanyl)propylamine + putrescine = S-methyl-5'-thioadenosine + spermidine + H(+)</text>
        <dbReference type="Rhea" id="RHEA:12721"/>
        <dbReference type="ChEBI" id="CHEBI:15378"/>
        <dbReference type="ChEBI" id="CHEBI:17509"/>
        <dbReference type="ChEBI" id="CHEBI:57443"/>
        <dbReference type="ChEBI" id="CHEBI:57834"/>
        <dbReference type="ChEBI" id="CHEBI:326268"/>
        <dbReference type="EC" id="2.5.1.16"/>
    </reaction>
</comment>
<comment type="pathway">
    <text evidence="1">Amine and polyamine biosynthesis; spermidine biosynthesis; spermidine from putrescine: step 1/1.</text>
</comment>
<comment type="subunit">
    <text evidence="1">Homodimer or homotetramer.</text>
</comment>
<comment type="subcellular location">
    <subcellularLocation>
        <location evidence="1">Cytoplasm</location>
    </subcellularLocation>
</comment>
<comment type="similarity">
    <text evidence="1">Belongs to the spermidine/spermine synthase family.</text>
</comment>
<proteinExistence type="inferred from homology"/>
<protein>
    <recommendedName>
        <fullName evidence="1">Polyamine aminopropyltransferase</fullName>
    </recommendedName>
    <alternativeName>
        <fullName evidence="1">Putrescine aminopropyltransferase</fullName>
        <shortName evidence="1">PAPT</shortName>
    </alternativeName>
    <alternativeName>
        <fullName evidence="1">Spermidine synthase</fullName>
        <shortName evidence="1">SPDS</shortName>
        <shortName evidence="1">SPDSY</shortName>
        <ecNumber evidence="1">2.5.1.16</ecNumber>
    </alternativeName>
</protein>
<organism>
    <name type="scientific">Salmonella paratyphi C (strain RKS4594)</name>
    <dbReference type="NCBI Taxonomy" id="476213"/>
    <lineage>
        <taxon>Bacteria</taxon>
        <taxon>Pseudomonadati</taxon>
        <taxon>Pseudomonadota</taxon>
        <taxon>Gammaproteobacteria</taxon>
        <taxon>Enterobacterales</taxon>
        <taxon>Enterobacteriaceae</taxon>
        <taxon>Salmonella</taxon>
    </lineage>
</organism>
<keyword id="KW-0963">Cytoplasm</keyword>
<keyword id="KW-0620">Polyamine biosynthesis</keyword>
<keyword id="KW-0745">Spermidine biosynthesis</keyword>
<keyword id="KW-0808">Transferase</keyword>
<evidence type="ECO:0000255" key="1">
    <source>
        <dbReference type="HAMAP-Rule" id="MF_00198"/>
    </source>
</evidence>
<accession>C0Q5M7</accession>
<gene>
    <name evidence="1" type="primary">speE</name>
    <name type="ordered locus">SPC_0179</name>
</gene>